<feature type="chain" id="PRO_1000078633" description="Cell division topological specificity factor">
    <location>
        <begin position="1"/>
        <end position="89"/>
    </location>
</feature>
<organism>
    <name type="scientific">Clostridium beijerinckii (strain ATCC 51743 / NCIMB 8052)</name>
    <name type="common">Clostridium acetobutylicum</name>
    <dbReference type="NCBI Taxonomy" id="290402"/>
    <lineage>
        <taxon>Bacteria</taxon>
        <taxon>Bacillati</taxon>
        <taxon>Bacillota</taxon>
        <taxon>Clostridia</taxon>
        <taxon>Eubacteriales</taxon>
        <taxon>Clostridiaceae</taxon>
        <taxon>Clostridium</taxon>
    </lineage>
</organism>
<reference key="1">
    <citation type="submission" date="2007-06" db="EMBL/GenBank/DDBJ databases">
        <title>Complete sequence of Clostridium beijerinckii NCIMB 8052.</title>
        <authorList>
            <consortium name="US DOE Joint Genome Institute"/>
            <person name="Copeland A."/>
            <person name="Lucas S."/>
            <person name="Lapidus A."/>
            <person name="Barry K."/>
            <person name="Detter J.C."/>
            <person name="Glavina del Rio T."/>
            <person name="Hammon N."/>
            <person name="Israni S."/>
            <person name="Dalin E."/>
            <person name="Tice H."/>
            <person name="Pitluck S."/>
            <person name="Sims D."/>
            <person name="Brettin T."/>
            <person name="Bruce D."/>
            <person name="Tapia R."/>
            <person name="Brainard J."/>
            <person name="Schmutz J."/>
            <person name="Larimer F."/>
            <person name="Land M."/>
            <person name="Hauser L."/>
            <person name="Kyrpides N."/>
            <person name="Mikhailova N."/>
            <person name="Bennet G."/>
            <person name="Cann I."/>
            <person name="Chen J.-S."/>
            <person name="Contreras A.L."/>
            <person name="Jones D."/>
            <person name="Kashket E."/>
            <person name="Mitchell W."/>
            <person name="Stoddard S."/>
            <person name="Schwarz W."/>
            <person name="Qureshi N."/>
            <person name="Young M."/>
            <person name="Shi Z."/>
            <person name="Ezeji T."/>
            <person name="White B."/>
            <person name="Blaschek H."/>
            <person name="Richardson P."/>
        </authorList>
    </citation>
    <scope>NUCLEOTIDE SEQUENCE [LARGE SCALE GENOMIC DNA]</scope>
    <source>
        <strain>ATCC 51743 / NCIMB 8052</strain>
    </source>
</reference>
<sequence length="89" mass="10015">MGFFKSLNSKPTPKEVAKDRLKLILIHDRGEIAPDIIEKIREEILEVISKYIDIQVEDVEISVNKNGDEEGENTSALIANIPIKSIKGR</sequence>
<name>MINE_CLOB8</name>
<comment type="function">
    <text evidence="1">Prevents the cell division inhibition by proteins MinC and MinD at internal division sites while permitting inhibition at polar sites. This ensures cell division at the proper site by restricting the formation of a division septum at the midpoint of the long axis of the cell.</text>
</comment>
<comment type="similarity">
    <text evidence="1">Belongs to the MinE family.</text>
</comment>
<dbReference type="EMBL" id="CP000721">
    <property type="protein sequence ID" value="ABR32686.1"/>
    <property type="molecule type" value="Genomic_DNA"/>
</dbReference>
<dbReference type="RefSeq" id="WP_011967847.1">
    <property type="nucleotide sequence ID" value="NC_009617.1"/>
</dbReference>
<dbReference type="SMR" id="A6LQQ6"/>
<dbReference type="GeneID" id="66343413"/>
<dbReference type="KEGG" id="cbe:Cbei_0498"/>
<dbReference type="eggNOG" id="COG0851">
    <property type="taxonomic scope" value="Bacteria"/>
</dbReference>
<dbReference type="HOGENOM" id="CLU_137929_1_0_9"/>
<dbReference type="Proteomes" id="UP000000565">
    <property type="component" value="Chromosome"/>
</dbReference>
<dbReference type="GO" id="GO:0051301">
    <property type="term" value="P:cell division"/>
    <property type="evidence" value="ECO:0007669"/>
    <property type="project" value="UniProtKB-KW"/>
</dbReference>
<dbReference type="GO" id="GO:0032955">
    <property type="term" value="P:regulation of division septum assembly"/>
    <property type="evidence" value="ECO:0007669"/>
    <property type="project" value="InterPro"/>
</dbReference>
<dbReference type="Gene3D" id="3.30.1070.10">
    <property type="entry name" value="Cell division topological specificity factor MinE"/>
    <property type="match status" value="1"/>
</dbReference>
<dbReference type="HAMAP" id="MF_00262">
    <property type="entry name" value="MinE"/>
    <property type="match status" value="1"/>
</dbReference>
<dbReference type="InterPro" id="IPR005527">
    <property type="entry name" value="MinE"/>
</dbReference>
<dbReference type="InterPro" id="IPR036707">
    <property type="entry name" value="MinE_sf"/>
</dbReference>
<dbReference type="NCBIfam" id="TIGR01215">
    <property type="entry name" value="minE"/>
    <property type="match status" value="1"/>
</dbReference>
<dbReference type="NCBIfam" id="NF001422">
    <property type="entry name" value="PRK00296.1"/>
    <property type="match status" value="1"/>
</dbReference>
<dbReference type="Pfam" id="PF03776">
    <property type="entry name" value="MinE"/>
    <property type="match status" value="1"/>
</dbReference>
<dbReference type="SUPFAM" id="SSF55229">
    <property type="entry name" value="Cell division protein MinE topological specificity domain"/>
    <property type="match status" value="1"/>
</dbReference>
<protein>
    <recommendedName>
        <fullName evidence="1">Cell division topological specificity factor</fullName>
    </recommendedName>
</protein>
<evidence type="ECO:0000255" key="1">
    <source>
        <dbReference type="HAMAP-Rule" id="MF_00262"/>
    </source>
</evidence>
<proteinExistence type="inferred from homology"/>
<accession>A6LQQ6</accession>
<keyword id="KW-0131">Cell cycle</keyword>
<keyword id="KW-0132">Cell division</keyword>
<gene>
    <name evidence="1" type="primary">minE</name>
    <name type="ordered locus">Cbei_0498</name>
</gene>